<dbReference type="EMBL" id="AAGW02010646">
    <property type="status" value="NOT_ANNOTATED_CDS"/>
    <property type="molecule type" value="Genomic_DNA"/>
</dbReference>
<dbReference type="RefSeq" id="XP_002709438.1">
    <property type="nucleotide sequence ID" value="XM_002709392.5"/>
</dbReference>
<dbReference type="RefSeq" id="XP_051698434.1">
    <property type="nucleotide sequence ID" value="XM_051842474.2"/>
</dbReference>
<dbReference type="PDB" id="3JAG">
    <property type="method" value="EM"/>
    <property type="resolution" value="3.65 A"/>
    <property type="chains" value="H=1-190"/>
</dbReference>
<dbReference type="PDB" id="3JAH">
    <property type="method" value="EM"/>
    <property type="resolution" value="3.45 A"/>
    <property type="chains" value="H=1-190"/>
</dbReference>
<dbReference type="PDB" id="3JAI">
    <property type="method" value="EM"/>
    <property type="resolution" value="3.65 A"/>
    <property type="chains" value="H=1-190"/>
</dbReference>
<dbReference type="PDB" id="5LZS">
    <property type="method" value="EM"/>
    <property type="resolution" value="3.31 A"/>
    <property type="chains" value="H=1-192"/>
</dbReference>
<dbReference type="PDB" id="5LZT">
    <property type="method" value="EM"/>
    <property type="resolution" value="3.65 A"/>
    <property type="chains" value="H=1-192"/>
</dbReference>
<dbReference type="PDB" id="5LZU">
    <property type="method" value="EM"/>
    <property type="resolution" value="3.75 A"/>
    <property type="chains" value="H=1-192"/>
</dbReference>
<dbReference type="PDB" id="5LZV">
    <property type="method" value="EM"/>
    <property type="resolution" value="3.35 A"/>
    <property type="chains" value="H=1-192"/>
</dbReference>
<dbReference type="PDB" id="5LZW">
    <property type="method" value="EM"/>
    <property type="resolution" value="3.53 A"/>
    <property type="chains" value="H=1-192"/>
</dbReference>
<dbReference type="PDB" id="5LZX">
    <property type="method" value="EM"/>
    <property type="resolution" value="3.67 A"/>
    <property type="chains" value="H=1-192"/>
</dbReference>
<dbReference type="PDB" id="5LZY">
    <property type="method" value="EM"/>
    <property type="resolution" value="3.99 A"/>
    <property type="chains" value="H=1-192"/>
</dbReference>
<dbReference type="PDB" id="5LZZ">
    <property type="method" value="EM"/>
    <property type="resolution" value="3.47 A"/>
    <property type="chains" value="H=1-192"/>
</dbReference>
<dbReference type="PDB" id="6D90">
    <property type="method" value="EM"/>
    <property type="resolution" value="3.20 A"/>
    <property type="chains" value="H=1-192"/>
</dbReference>
<dbReference type="PDB" id="6D9J">
    <property type="method" value="EM"/>
    <property type="resolution" value="3.20 A"/>
    <property type="chains" value="H=1-192"/>
</dbReference>
<dbReference type="PDB" id="6FTG">
    <property type="method" value="EM"/>
    <property type="resolution" value="9.10 A"/>
    <property type="chains" value="H=1-190"/>
</dbReference>
<dbReference type="PDB" id="6FTI">
    <property type="method" value="EM"/>
    <property type="resolution" value="4.20 A"/>
    <property type="chains" value="H=1-190"/>
</dbReference>
<dbReference type="PDB" id="6FTJ">
    <property type="method" value="EM"/>
    <property type="resolution" value="4.70 A"/>
    <property type="chains" value="H=1-190"/>
</dbReference>
<dbReference type="PDB" id="6HCF">
    <property type="method" value="EM"/>
    <property type="resolution" value="3.90 A"/>
    <property type="chains" value="H3=1-192"/>
</dbReference>
<dbReference type="PDB" id="6HCJ">
    <property type="method" value="EM"/>
    <property type="resolution" value="3.80 A"/>
    <property type="chains" value="H3=1-192"/>
</dbReference>
<dbReference type="PDB" id="6HCM">
    <property type="method" value="EM"/>
    <property type="resolution" value="6.80 A"/>
    <property type="chains" value="H3=1-192"/>
</dbReference>
<dbReference type="PDB" id="6HCQ">
    <property type="method" value="EM"/>
    <property type="resolution" value="6.50 A"/>
    <property type="chains" value="H3=1-192"/>
</dbReference>
<dbReference type="PDB" id="6MTB">
    <property type="method" value="EM"/>
    <property type="resolution" value="3.60 A"/>
    <property type="chains" value="H=1-190"/>
</dbReference>
<dbReference type="PDB" id="6MTC">
    <property type="method" value="EM"/>
    <property type="resolution" value="3.40 A"/>
    <property type="chains" value="H=1-190"/>
</dbReference>
<dbReference type="PDB" id="6MTD">
    <property type="method" value="EM"/>
    <property type="resolution" value="3.30 A"/>
    <property type="chains" value="H=1-190"/>
</dbReference>
<dbReference type="PDB" id="6MTE">
    <property type="method" value="EM"/>
    <property type="resolution" value="3.40 A"/>
    <property type="chains" value="H=1-190"/>
</dbReference>
<dbReference type="PDB" id="6P5I">
    <property type="method" value="EM"/>
    <property type="resolution" value="3.10 A"/>
    <property type="chains" value="AH=1-192"/>
</dbReference>
<dbReference type="PDB" id="6P5J">
    <property type="method" value="EM"/>
    <property type="resolution" value="3.10 A"/>
    <property type="chains" value="AH=1-192"/>
</dbReference>
<dbReference type="PDB" id="6P5K">
    <property type="method" value="EM"/>
    <property type="resolution" value="3.10 A"/>
    <property type="chains" value="AH=1-192"/>
</dbReference>
<dbReference type="PDB" id="6P5N">
    <property type="method" value="EM"/>
    <property type="resolution" value="3.20 A"/>
    <property type="chains" value="AH=1-192"/>
</dbReference>
<dbReference type="PDB" id="6R5Q">
    <property type="method" value="EM"/>
    <property type="resolution" value="3.00 A"/>
    <property type="chains" value="H=1-190"/>
</dbReference>
<dbReference type="PDB" id="6R6G">
    <property type="method" value="EM"/>
    <property type="resolution" value="3.70 A"/>
    <property type="chains" value="H=1-190"/>
</dbReference>
<dbReference type="PDB" id="6R6P">
    <property type="method" value="EM"/>
    <property type="resolution" value="3.10 A"/>
    <property type="chains" value="H=1-190"/>
</dbReference>
<dbReference type="PDB" id="6R7Q">
    <property type="method" value="EM"/>
    <property type="resolution" value="3.90 A"/>
    <property type="chains" value="H=1-190"/>
</dbReference>
<dbReference type="PDB" id="6SGC">
    <property type="method" value="EM"/>
    <property type="resolution" value="2.80 A"/>
    <property type="chains" value="H2=1-192"/>
</dbReference>
<dbReference type="PDB" id="6T59">
    <property type="method" value="EM"/>
    <property type="resolution" value="3.11 A"/>
    <property type="chains" value="H3=1-192"/>
</dbReference>
<dbReference type="PDB" id="6ZVK">
    <property type="method" value="EM"/>
    <property type="resolution" value="3.49 A"/>
    <property type="chains" value="W2=1-190"/>
</dbReference>
<dbReference type="PDB" id="7A01">
    <property type="method" value="EM"/>
    <property type="resolution" value="3.60 A"/>
    <property type="chains" value="W2=1-190"/>
</dbReference>
<dbReference type="PDB" id="7MDZ">
    <property type="method" value="EM"/>
    <property type="resolution" value="3.20 A"/>
    <property type="chains" value="H=1-192"/>
</dbReference>
<dbReference type="PDB" id="7NFX">
    <property type="method" value="EM"/>
    <property type="resolution" value="3.20 A"/>
    <property type="chains" value="H=1-192"/>
</dbReference>
<dbReference type="PDB" id="7NWG">
    <property type="method" value="EM"/>
    <property type="resolution" value="3.80 A"/>
    <property type="chains" value="H3=1-190"/>
</dbReference>
<dbReference type="PDB" id="7NWH">
    <property type="method" value="EM"/>
    <property type="resolution" value="4.10 A"/>
    <property type="chains" value="H=1-190"/>
</dbReference>
<dbReference type="PDB" id="7NWI">
    <property type="method" value="EM"/>
    <property type="resolution" value="3.13 A"/>
    <property type="chains" value="H=1-190"/>
</dbReference>
<dbReference type="PDB" id="7O7Y">
    <property type="method" value="EM"/>
    <property type="resolution" value="2.20 A"/>
    <property type="chains" value="BH=1-192"/>
</dbReference>
<dbReference type="PDB" id="7O7Z">
    <property type="method" value="EM"/>
    <property type="resolution" value="2.40 A"/>
    <property type="chains" value="BH=1-192"/>
</dbReference>
<dbReference type="PDB" id="7O80">
    <property type="method" value="EM"/>
    <property type="resolution" value="2.90 A"/>
    <property type="chains" value="BH=1-192"/>
</dbReference>
<dbReference type="PDB" id="7O81">
    <property type="method" value="EM"/>
    <property type="resolution" value="3.10 A"/>
    <property type="chains" value="BH=1-192"/>
</dbReference>
<dbReference type="PDB" id="7OBR">
    <property type="method" value="EM"/>
    <property type="resolution" value="2.80 A"/>
    <property type="chains" value="H=1-192"/>
</dbReference>
<dbReference type="PDB" id="7OYD">
    <property type="method" value="EM"/>
    <property type="resolution" value="2.30 A"/>
    <property type="chains" value="H=1-192"/>
</dbReference>
<dbReference type="PDB" id="7QWQ">
    <property type="method" value="EM"/>
    <property type="resolution" value="2.83 A"/>
    <property type="chains" value="H=1-192"/>
</dbReference>
<dbReference type="PDB" id="7QWR">
    <property type="method" value="EM"/>
    <property type="resolution" value="2.90 A"/>
    <property type="chains" value="H=1-192"/>
</dbReference>
<dbReference type="PDB" id="7QWS">
    <property type="method" value="EM"/>
    <property type="resolution" value="3.40 A"/>
    <property type="chains" value="H=1-192"/>
</dbReference>
<dbReference type="PDB" id="7TM3">
    <property type="method" value="EM"/>
    <property type="resolution" value="3.25 A"/>
    <property type="chains" value="H=1-192"/>
</dbReference>
<dbReference type="PDB" id="7TOQ">
    <property type="method" value="EM"/>
    <property type="resolution" value="3.10 A"/>
    <property type="chains" value="AL09=1-190"/>
</dbReference>
<dbReference type="PDB" id="7TOR">
    <property type="method" value="EM"/>
    <property type="resolution" value="2.90 A"/>
    <property type="chains" value="AL09=1-190"/>
</dbReference>
<dbReference type="PDB" id="7TUT">
    <property type="method" value="EM"/>
    <property type="resolution" value="3.88 A"/>
    <property type="chains" value="H=1-192"/>
</dbReference>
<dbReference type="PDB" id="7UCJ">
    <property type="method" value="EM"/>
    <property type="resolution" value="3.10 A"/>
    <property type="chains" value="H=1-190"/>
</dbReference>
<dbReference type="PDB" id="7UCK">
    <property type="method" value="EM"/>
    <property type="resolution" value="2.80 A"/>
    <property type="chains" value="H=1-190"/>
</dbReference>
<dbReference type="PDB" id="7ZJW">
    <property type="method" value="EM"/>
    <property type="resolution" value="2.80 A"/>
    <property type="chains" value="LK=1-192"/>
</dbReference>
<dbReference type="PDB" id="7ZJX">
    <property type="method" value="EM"/>
    <property type="resolution" value="3.10 A"/>
    <property type="chains" value="LK=1-192"/>
</dbReference>
<dbReference type="PDB" id="8B5L">
    <property type="method" value="EM"/>
    <property type="resolution" value="2.86 A"/>
    <property type="chains" value="H=1-190"/>
</dbReference>
<dbReference type="PDB" id="8B6C">
    <property type="method" value="EM"/>
    <property type="resolution" value="2.79 A"/>
    <property type="chains" value="H=1-190"/>
</dbReference>
<dbReference type="PDB" id="8BHF">
    <property type="method" value="EM"/>
    <property type="resolution" value="3.10 A"/>
    <property type="chains" value="q3=1-190"/>
</dbReference>
<dbReference type="PDB" id="8BPO">
    <property type="method" value="EM"/>
    <property type="resolution" value="2.80 A"/>
    <property type="chains" value="H2=1-192"/>
</dbReference>
<dbReference type="PDB" id="8BTK">
    <property type="method" value="EM"/>
    <property type="resolution" value="3.50 A"/>
    <property type="chains" value="BH=1-192"/>
</dbReference>
<dbReference type="PDB" id="8P2K">
    <property type="method" value="EM"/>
    <property type="resolution" value="2.90 A"/>
    <property type="chains" value="BH=1-192"/>
</dbReference>
<dbReference type="PDB" id="8RJB">
    <property type="method" value="EM"/>
    <property type="resolution" value="2.69 A"/>
    <property type="chains" value="H=1-192"/>
</dbReference>
<dbReference type="PDB" id="8RJC">
    <property type="method" value="EM"/>
    <property type="resolution" value="2.90 A"/>
    <property type="chains" value="H=1-192"/>
</dbReference>
<dbReference type="PDB" id="8RJD">
    <property type="method" value="EM"/>
    <property type="resolution" value="2.79 A"/>
    <property type="chains" value="H=1-192"/>
</dbReference>
<dbReference type="PDB" id="8SCB">
    <property type="method" value="EM"/>
    <property type="resolution" value="2.50 A"/>
    <property type="chains" value="H=1-192"/>
</dbReference>
<dbReference type="PDB" id="8VFT">
    <property type="method" value="EM"/>
    <property type="resolution" value="3.30 A"/>
    <property type="chains" value="H=1-192"/>
</dbReference>
<dbReference type="PDB" id="9BDL">
    <property type="method" value="EM"/>
    <property type="resolution" value="2.80 A"/>
    <property type="chains" value="AL09=1-190"/>
</dbReference>
<dbReference type="PDB" id="9BDN">
    <property type="method" value="EM"/>
    <property type="resolution" value="3.10 A"/>
    <property type="chains" value="AL09=1-190"/>
</dbReference>
<dbReference type="PDB" id="9BDP">
    <property type="method" value="EM"/>
    <property type="resolution" value="3.70 A"/>
    <property type="chains" value="AL09=1-190"/>
</dbReference>
<dbReference type="PDB" id="9F1B">
    <property type="method" value="EM"/>
    <property type="resolution" value="3.01 A"/>
    <property type="chains" value="BH=1-192"/>
</dbReference>
<dbReference type="PDB" id="9F1C">
    <property type="method" value="EM"/>
    <property type="resolution" value="3.78 A"/>
    <property type="chains" value="BH=1-192"/>
</dbReference>
<dbReference type="PDB" id="9F1D">
    <property type="method" value="EM"/>
    <property type="resolution" value="3.26 A"/>
    <property type="chains" value="BH=1-192"/>
</dbReference>
<dbReference type="PDBsum" id="3JAG"/>
<dbReference type="PDBsum" id="3JAH"/>
<dbReference type="PDBsum" id="3JAI"/>
<dbReference type="PDBsum" id="5LZS"/>
<dbReference type="PDBsum" id="5LZT"/>
<dbReference type="PDBsum" id="5LZU"/>
<dbReference type="PDBsum" id="5LZV"/>
<dbReference type="PDBsum" id="5LZW"/>
<dbReference type="PDBsum" id="5LZX"/>
<dbReference type="PDBsum" id="5LZY"/>
<dbReference type="PDBsum" id="5LZZ"/>
<dbReference type="PDBsum" id="6D90"/>
<dbReference type="PDBsum" id="6D9J"/>
<dbReference type="PDBsum" id="6FTG"/>
<dbReference type="PDBsum" id="6FTI"/>
<dbReference type="PDBsum" id="6FTJ"/>
<dbReference type="PDBsum" id="6HCF"/>
<dbReference type="PDBsum" id="6HCJ"/>
<dbReference type="PDBsum" id="6HCM"/>
<dbReference type="PDBsum" id="6HCQ"/>
<dbReference type="PDBsum" id="6MTB"/>
<dbReference type="PDBsum" id="6MTC"/>
<dbReference type="PDBsum" id="6MTD"/>
<dbReference type="PDBsum" id="6MTE"/>
<dbReference type="PDBsum" id="6P5I"/>
<dbReference type="PDBsum" id="6P5J"/>
<dbReference type="PDBsum" id="6P5K"/>
<dbReference type="PDBsum" id="6P5N"/>
<dbReference type="PDBsum" id="6R5Q"/>
<dbReference type="PDBsum" id="6R6G"/>
<dbReference type="PDBsum" id="6R6P"/>
<dbReference type="PDBsum" id="6R7Q"/>
<dbReference type="PDBsum" id="6SGC"/>
<dbReference type="PDBsum" id="6T59"/>
<dbReference type="PDBsum" id="6ZVK"/>
<dbReference type="PDBsum" id="7A01"/>
<dbReference type="PDBsum" id="7MDZ"/>
<dbReference type="PDBsum" id="7NFX"/>
<dbReference type="PDBsum" id="7NWG"/>
<dbReference type="PDBsum" id="7NWH"/>
<dbReference type="PDBsum" id="7NWI"/>
<dbReference type="PDBsum" id="7O7Y"/>
<dbReference type="PDBsum" id="7O7Z"/>
<dbReference type="PDBsum" id="7O80"/>
<dbReference type="PDBsum" id="7O81"/>
<dbReference type="PDBsum" id="7OBR"/>
<dbReference type="PDBsum" id="7OYD"/>
<dbReference type="PDBsum" id="7QWQ"/>
<dbReference type="PDBsum" id="7QWR"/>
<dbReference type="PDBsum" id="7QWS"/>
<dbReference type="PDBsum" id="7TM3"/>
<dbReference type="PDBsum" id="7TOQ"/>
<dbReference type="PDBsum" id="7TOR"/>
<dbReference type="PDBsum" id="7TUT"/>
<dbReference type="PDBsum" id="7UCJ"/>
<dbReference type="PDBsum" id="7UCK"/>
<dbReference type="PDBsum" id="7ZJW"/>
<dbReference type="PDBsum" id="7ZJX"/>
<dbReference type="PDBsum" id="8B5L"/>
<dbReference type="PDBsum" id="8B6C"/>
<dbReference type="PDBsum" id="8BHF"/>
<dbReference type="PDBsum" id="8BPO"/>
<dbReference type="PDBsum" id="8BTK"/>
<dbReference type="PDBsum" id="8P2K"/>
<dbReference type="PDBsum" id="8RJB"/>
<dbReference type="PDBsum" id="8RJC"/>
<dbReference type="PDBsum" id="8RJD"/>
<dbReference type="PDBsum" id="8SCB"/>
<dbReference type="PDBsum" id="8VFT"/>
<dbReference type="PDBsum" id="9BDL"/>
<dbReference type="PDBsum" id="9BDN"/>
<dbReference type="PDBsum" id="9BDP"/>
<dbReference type="PDBsum" id="9F1B"/>
<dbReference type="PDBsum" id="9F1C"/>
<dbReference type="PDBsum" id="9F1D"/>
<dbReference type="EMDB" id="EMD-0099"/>
<dbReference type="EMDB" id="EMD-0100"/>
<dbReference type="EMDB" id="EMD-0192"/>
<dbReference type="EMDB" id="EMD-0194"/>
<dbReference type="EMDB" id="EMD-0195"/>
<dbReference type="EMDB" id="EMD-0197"/>
<dbReference type="EMDB" id="EMD-10181"/>
<dbReference type="EMDB" id="EMD-10380"/>
<dbReference type="EMDB" id="EMD-11459"/>
<dbReference type="EMDB" id="EMD-11590"/>
<dbReference type="EMDB" id="EMD-12303"/>
<dbReference type="EMDB" id="EMD-12631"/>
<dbReference type="EMDB" id="EMD-12632"/>
<dbReference type="EMDB" id="EMD-12633"/>
<dbReference type="EMDB" id="EMD-12756"/>
<dbReference type="EMDB" id="EMD-12757"/>
<dbReference type="EMDB" id="EMD-12758"/>
<dbReference type="EMDB" id="EMD-12759"/>
<dbReference type="EMDB" id="EMD-12801"/>
<dbReference type="EMDB" id="EMD-13114"/>
<dbReference type="EMDB" id="EMD-14191"/>
<dbReference type="EMDB" id="EMD-14192"/>
<dbReference type="EMDB" id="EMD-14193"/>
<dbReference type="EMDB" id="EMD-14751"/>
<dbReference type="EMDB" id="EMD-14752"/>
<dbReference type="EMDB" id="EMD-15860"/>
<dbReference type="EMDB" id="EMD-15863"/>
<dbReference type="EMDB" id="EMD-16052"/>
<dbReference type="EMDB" id="EMD-16155"/>
<dbReference type="EMDB" id="EMD-16232"/>
<dbReference type="EMDB" id="EMD-17367"/>
<dbReference type="EMDB" id="EMD-19195"/>
<dbReference type="EMDB" id="EMD-19197"/>
<dbReference type="EMDB" id="EMD-19198"/>
<dbReference type="EMDB" id="EMD-20255"/>
<dbReference type="EMDB" id="EMD-20256"/>
<dbReference type="EMDB" id="EMD-20257"/>
<dbReference type="EMDB" id="EMD-20258"/>
<dbReference type="EMDB" id="EMD-23785"/>
<dbReference type="EMDB" id="EMD-25994"/>
<dbReference type="EMDB" id="EMD-26035"/>
<dbReference type="EMDB" id="EMD-26036"/>
<dbReference type="EMDB" id="EMD-26133"/>
<dbReference type="EMDB" id="EMD-26444"/>
<dbReference type="EMDB" id="EMD-26445"/>
<dbReference type="EMDB" id="EMD-40344"/>
<dbReference type="EMDB" id="EMD-4130"/>
<dbReference type="EMDB" id="EMD-4131"/>
<dbReference type="EMDB" id="EMD-4132"/>
<dbReference type="EMDB" id="EMD-4133"/>
<dbReference type="EMDB" id="EMD-4134"/>
<dbReference type="EMDB" id="EMD-4135"/>
<dbReference type="EMDB" id="EMD-4136"/>
<dbReference type="EMDB" id="EMD-4137"/>
<dbReference type="EMDB" id="EMD-4300"/>
<dbReference type="EMDB" id="EMD-4315"/>
<dbReference type="EMDB" id="EMD-4316"/>
<dbReference type="EMDB" id="EMD-4317"/>
<dbReference type="EMDB" id="EMD-43189"/>
<dbReference type="EMDB" id="EMD-44461"/>
<dbReference type="EMDB" id="EMD-44463"/>
<dbReference type="EMDB" id="EMD-44464"/>
<dbReference type="EMDB" id="EMD-4729"/>
<dbReference type="EMDB" id="EMD-4735"/>
<dbReference type="EMDB" id="EMD-4737"/>
<dbReference type="EMDB" id="EMD-4745"/>
<dbReference type="EMDB" id="EMD-50124"/>
<dbReference type="EMDB" id="EMD-50125"/>
<dbReference type="EMDB" id="EMD-50126"/>
<dbReference type="EMDB" id="EMD-7834"/>
<dbReference type="EMDB" id="EMD-7836"/>
<dbReference type="EMDB" id="EMD-9237"/>
<dbReference type="EMDB" id="EMD-9239"/>
<dbReference type="EMDB" id="EMD-9240"/>
<dbReference type="EMDB" id="EMD-9242"/>
<dbReference type="SMR" id="G1SWI6"/>
<dbReference type="FunCoup" id="G1SWI6">
    <property type="interactions" value="1370"/>
</dbReference>
<dbReference type="IntAct" id="G1SWI6">
    <property type="interactions" value="1"/>
</dbReference>
<dbReference type="STRING" id="9986.ENSOCUP00000007851"/>
<dbReference type="PaxDb" id="9986-ENSOCUP00000021633"/>
<dbReference type="Ensembl" id="ENSOCUT00000009088.4">
    <property type="protein sequence ID" value="ENSOCUP00000007851.3"/>
    <property type="gene ID" value="ENSOCUG00000009091.4"/>
</dbReference>
<dbReference type="Ensembl" id="ENSOCUT00000027643.2">
    <property type="protein sequence ID" value="ENSOCUP00000021633.1"/>
    <property type="gene ID" value="ENSOCUG00000027002.2"/>
</dbReference>
<dbReference type="GeneID" id="108175358"/>
<dbReference type="KEGG" id="ocu:108175358"/>
<dbReference type="CTD" id="6133"/>
<dbReference type="eggNOG" id="KOG3255">
    <property type="taxonomic scope" value="Eukaryota"/>
</dbReference>
<dbReference type="GeneTree" id="ENSGT00390000015224"/>
<dbReference type="HOGENOM" id="CLU_065464_0_2_1"/>
<dbReference type="OMA" id="YAHFPMK"/>
<dbReference type="OrthoDB" id="10252633at2759"/>
<dbReference type="TreeFam" id="TF300033"/>
<dbReference type="Proteomes" id="UP000001811">
    <property type="component" value="Chromosome 2"/>
</dbReference>
<dbReference type="Bgee" id="ENSOCUG00000009091">
    <property type="expression patterns" value="Expressed in left lung and 15 other cell types or tissues"/>
</dbReference>
<dbReference type="GO" id="GO:0022625">
    <property type="term" value="C:cytosolic large ribosomal subunit"/>
    <property type="evidence" value="ECO:0007669"/>
    <property type="project" value="TreeGrafter"/>
</dbReference>
<dbReference type="GO" id="GO:0019843">
    <property type="term" value="F:rRNA binding"/>
    <property type="evidence" value="ECO:0007669"/>
    <property type="project" value="InterPro"/>
</dbReference>
<dbReference type="GO" id="GO:0003735">
    <property type="term" value="F:structural constituent of ribosome"/>
    <property type="evidence" value="ECO:0007669"/>
    <property type="project" value="InterPro"/>
</dbReference>
<dbReference type="GO" id="GO:0002181">
    <property type="term" value="P:cytoplasmic translation"/>
    <property type="evidence" value="ECO:0007669"/>
    <property type="project" value="TreeGrafter"/>
</dbReference>
<dbReference type="FunFam" id="3.90.930.12:FF:000003">
    <property type="entry name" value="60S ribosomal protein L9"/>
    <property type="match status" value="1"/>
</dbReference>
<dbReference type="FunFam" id="3.90.930.12:FF:000005">
    <property type="entry name" value="60S ribosomal protein L9"/>
    <property type="match status" value="1"/>
</dbReference>
<dbReference type="Gene3D" id="3.90.930.12">
    <property type="entry name" value="Ribosomal protein L6, alpha-beta domain"/>
    <property type="match status" value="2"/>
</dbReference>
<dbReference type="InterPro" id="IPR000702">
    <property type="entry name" value="Ribosomal_uL6-like"/>
</dbReference>
<dbReference type="InterPro" id="IPR036789">
    <property type="entry name" value="Ribosomal_uL6-like_a/b-dom_sf"/>
</dbReference>
<dbReference type="InterPro" id="IPR020040">
    <property type="entry name" value="Ribosomal_uL6_a/b-dom"/>
</dbReference>
<dbReference type="InterPro" id="IPR002359">
    <property type="entry name" value="Ribosomal_uL6_CS2"/>
</dbReference>
<dbReference type="PANTHER" id="PTHR11655:SF16">
    <property type="entry name" value="60S RIBOSOMAL PROTEIN L9"/>
    <property type="match status" value="1"/>
</dbReference>
<dbReference type="PANTHER" id="PTHR11655">
    <property type="entry name" value="60S/50S RIBOSOMAL PROTEIN L6/L9"/>
    <property type="match status" value="1"/>
</dbReference>
<dbReference type="Pfam" id="PF00347">
    <property type="entry name" value="Ribosomal_L6"/>
    <property type="match status" value="2"/>
</dbReference>
<dbReference type="PIRSF" id="PIRSF002162">
    <property type="entry name" value="Ribosomal_L6"/>
    <property type="match status" value="1"/>
</dbReference>
<dbReference type="SUPFAM" id="SSF56053">
    <property type="entry name" value="Ribosomal protein L6"/>
    <property type="match status" value="2"/>
</dbReference>
<dbReference type="PROSITE" id="PS00700">
    <property type="entry name" value="RIBOSOMAL_L6_2"/>
    <property type="match status" value="1"/>
</dbReference>
<sequence>MKTILSNQTVDIPENVDISLKGRTVIVKGPRGTLRRDFNHINVELSLLGKKKKRLRVDKWWGNRKELATVRTICSHVQNMIKGVTLGFRYKMRSVYAHFPINVVIQENGSLVEIRNFLGEKYIRRVRMRPGVACSVSQAQKDELVLEGNDIELVSNSAALIQQATTVKNKDIRKFLDGIYVSEKGTVQQADE</sequence>
<accession>G1SWI6</accession>
<accession>G1TX33</accession>
<gene>
    <name type="primary">RPL9</name>
</gene>
<protein>
    <recommendedName>
        <fullName>Large ribosomal subunit protein uL6</fullName>
    </recommendedName>
    <alternativeName>
        <fullName>60S ribosomal protein L9</fullName>
    </alternativeName>
</protein>
<name>RL9_RABIT</name>
<comment type="function">
    <text evidence="2 3">Component of the large ribosomal subunit (PubMed:26245381, PubMed:27863242). The ribosome is a large ribonucleoprotein complex responsible for the synthesis of proteins in the cell (PubMed:26245381, PubMed:27863242).</text>
</comment>
<comment type="subunit">
    <text evidence="2 3 4 5 6 7 8 9 10 11 12 13">Component of the large ribosomal subunit.</text>
</comment>
<comment type="subcellular location">
    <subcellularLocation>
        <location evidence="2 3 4 5 6 7 8 9 10 11 12 13">Cytoplasm</location>
    </subcellularLocation>
</comment>
<comment type="similarity">
    <text evidence="14">Belongs to the universal ribosomal protein uL6 family.</text>
</comment>
<keyword id="KW-0002">3D-structure</keyword>
<keyword id="KW-0007">Acetylation</keyword>
<keyword id="KW-0963">Cytoplasm</keyword>
<keyword id="KW-1185">Reference proteome</keyword>
<keyword id="KW-0687">Ribonucleoprotein</keyword>
<keyword id="KW-0689">Ribosomal protein</keyword>
<organism>
    <name type="scientific">Oryctolagus cuniculus</name>
    <name type="common">Rabbit</name>
    <dbReference type="NCBI Taxonomy" id="9986"/>
    <lineage>
        <taxon>Eukaryota</taxon>
        <taxon>Metazoa</taxon>
        <taxon>Chordata</taxon>
        <taxon>Craniata</taxon>
        <taxon>Vertebrata</taxon>
        <taxon>Euteleostomi</taxon>
        <taxon>Mammalia</taxon>
        <taxon>Eutheria</taxon>
        <taxon>Euarchontoglires</taxon>
        <taxon>Glires</taxon>
        <taxon>Lagomorpha</taxon>
        <taxon>Leporidae</taxon>
        <taxon>Oryctolagus</taxon>
    </lineage>
</organism>
<evidence type="ECO:0000250" key="1">
    <source>
        <dbReference type="UniProtKB" id="P32969"/>
    </source>
</evidence>
<evidence type="ECO:0000269" key="2">
    <source>
    </source>
</evidence>
<evidence type="ECO:0000269" key="3">
    <source>
    </source>
</evidence>
<evidence type="ECO:0000269" key="4">
    <source>
    </source>
</evidence>
<evidence type="ECO:0000269" key="5">
    <source>
    </source>
</evidence>
<evidence type="ECO:0000269" key="6">
    <source>
    </source>
</evidence>
<evidence type="ECO:0000269" key="7">
    <source>
    </source>
</evidence>
<evidence type="ECO:0000269" key="8">
    <source>
    </source>
</evidence>
<evidence type="ECO:0000269" key="9">
    <source>
    </source>
</evidence>
<evidence type="ECO:0000269" key="10">
    <source>
    </source>
</evidence>
<evidence type="ECO:0000269" key="11">
    <source>
    </source>
</evidence>
<evidence type="ECO:0000269" key="12">
    <source>
    </source>
</evidence>
<evidence type="ECO:0000269" key="13">
    <source>
    </source>
</evidence>
<evidence type="ECO:0000305" key="14"/>
<evidence type="ECO:0007744" key="15">
    <source>
        <dbReference type="PDB" id="3JAG"/>
    </source>
</evidence>
<evidence type="ECO:0007744" key="16">
    <source>
        <dbReference type="PDB" id="3JAH"/>
    </source>
</evidence>
<evidence type="ECO:0007744" key="17">
    <source>
        <dbReference type="PDB" id="5LZS"/>
    </source>
</evidence>
<evidence type="ECO:0007744" key="18">
    <source>
        <dbReference type="PDB" id="5LZT"/>
    </source>
</evidence>
<evidence type="ECO:0007744" key="19">
    <source>
        <dbReference type="PDB" id="6D90"/>
    </source>
</evidence>
<evidence type="ECO:0007744" key="20">
    <source>
        <dbReference type="PDB" id="6D9J"/>
    </source>
</evidence>
<evidence type="ECO:0007744" key="21">
    <source>
        <dbReference type="PDB" id="6HCF"/>
    </source>
</evidence>
<evidence type="ECO:0007744" key="22">
    <source>
        <dbReference type="PDB" id="6HCJ"/>
    </source>
</evidence>
<evidence type="ECO:0007744" key="23">
    <source>
        <dbReference type="PDB" id="6MTD"/>
    </source>
</evidence>
<evidence type="ECO:0007744" key="24">
    <source>
        <dbReference type="PDB" id="6MTE"/>
    </source>
</evidence>
<evidence type="ECO:0007744" key="25">
    <source>
        <dbReference type="PDB" id="6P5I"/>
    </source>
</evidence>
<evidence type="ECO:0007744" key="26">
    <source>
        <dbReference type="PDB" id="6P5J"/>
    </source>
</evidence>
<evidence type="ECO:0007744" key="27">
    <source>
        <dbReference type="PDB" id="6R5Q"/>
    </source>
</evidence>
<evidence type="ECO:0007744" key="28">
    <source>
        <dbReference type="PDB" id="6R6G"/>
    </source>
</evidence>
<evidence type="ECO:0007744" key="29">
    <source>
        <dbReference type="PDB" id="6SGC"/>
    </source>
</evidence>
<evidence type="ECO:0007744" key="30">
    <source>
        <dbReference type="PDB" id="6ZVK"/>
    </source>
</evidence>
<evidence type="ECO:0007744" key="31">
    <source>
        <dbReference type="PDB" id="7A01"/>
    </source>
</evidence>
<evidence type="ECO:0007744" key="32">
    <source>
        <dbReference type="PDB" id="7OYD"/>
    </source>
</evidence>
<evidence type="ECO:0007744" key="33">
    <source>
        <dbReference type="PDB" id="7UCJ"/>
    </source>
</evidence>
<evidence type="ECO:0007744" key="34">
    <source>
        <dbReference type="PDB" id="7UCK"/>
    </source>
</evidence>
<evidence type="ECO:0007744" key="35">
    <source>
        <dbReference type="PDB" id="7ZJW"/>
    </source>
</evidence>
<evidence type="ECO:0007744" key="36">
    <source>
        <dbReference type="PDB" id="7ZJX"/>
    </source>
</evidence>
<proteinExistence type="evidence at protein level"/>
<reference key="1">
    <citation type="journal article" date="2011" name="Nature">
        <title>A high-resolution map of human evolutionary constraint using 29 mammals.</title>
        <authorList>
            <person name="Lindblad-Toh K."/>
            <person name="Garber M."/>
            <person name="Zuk O."/>
            <person name="Lin M.F."/>
            <person name="Parker B.J."/>
            <person name="Washietl S."/>
            <person name="Kheradpour P."/>
            <person name="Ernst J."/>
            <person name="Jordan G."/>
            <person name="Mauceli E."/>
            <person name="Ward L.D."/>
            <person name="Lowe C.B."/>
            <person name="Holloway A.K."/>
            <person name="Clamp M."/>
            <person name="Gnerre S."/>
            <person name="Alfoldi J."/>
            <person name="Beal K."/>
            <person name="Chang J."/>
            <person name="Clawson H."/>
            <person name="Cuff J."/>
            <person name="Di Palma F."/>
            <person name="Fitzgerald S."/>
            <person name="Flicek P."/>
            <person name="Guttman M."/>
            <person name="Hubisz M.J."/>
            <person name="Jaffe D.B."/>
            <person name="Jungreis I."/>
            <person name="Kent W.J."/>
            <person name="Kostka D."/>
            <person name="Lara M."/>
            <person name="Martins A.L."/>
            <person name="Massingham T."/>
            <person name="Moltke I."/>
            <person name="Raney B.J."/>
            <person name="Rasmussen M.D."/>
            <person name="Robinson J."/>
            <person name="Stark A."/>
            <person name="Vilella A.J."/>
            <person name="Wen J."/>
            <person name="Xie X."/>
            <person name="Zody M.C."/>
            <person name="Baldwin J."/>
            <person name="Bloom T."/>
            <person name="Chin C.W."/>
            <person name="Heiman D."/>
            <person name="Nicol R."/>
            <person name="Nusbaum C."/>
            <person name="Young S."/>
            <person name="Wilkinson J."/>
            <person name="Worley K.C."/>
            <person name="Kovar C.L."/>
            <person name="Muzny D.M."/>
            <person name="Gibbs R.A."/>
            <person name="Cree A."/>
            <person name="Dihn H.H."/>
            <person name="Fowler G."/>
            <person name="Jhangiani S."/>
            <person name="Joshi V."/>
            <person name="Lee S."/>
            <person name="Lewis L.R."/>
            <person name="Nazareth L.V."/>
            <person name="Okwuonu G."/>
            <person name="Santibanez J."/>
            <person name="Warren W.C."/>
            <person name="Mardis E.R."/>
            <person name="Weinstock G.M."/>
            <person name="Wilson R.K."/>
            <person name="Delehaunty K."/>
            <person name="Dooling D."/>
            <person name="Fronik C."/>
            <person name="Fulton L."/>
            <person name="Fulton B."/>
            <person name="Graves T."/>
            <person name="Minx P."/>
            <person name="Sodergren E."/>
            <person name="Birney E."/>
            <person name="Margulies E.H."/>
            <person name="Herrero J."/>
            <person name="Green E.D."/>
            <person name="Haussler D."/>
            <person name="Siepel A."/>
            <person name="Goldman N."/>
            <person name="Pollard K.S."/>
            <person name="Pedersen J.S."/>
            <person name="Lander E.S."/>
            <person name="Kellis M."/>
        </authorList>
    </citation>
    <scope>NUCLEOTIDE SEQUENCE [LARGE SCALE GENOMIC DNA]</scope>
    <source>
        <strain>Thorbecke</strain>
    </source>
</reference>
<reference evidence="15 16" key="2">
    <citation type="journal article" date="2015" name="Nature">
        <title>Structural basis for stop codon recognition in eukaryotes.</title>
        <authorList>
            <person name="Brown A."/>
            <person name="Shao S."/>
            <person name="Murray J."/>
            <person name="Hegde R.S."/>
            <person name="Ramakrishnan V."/>
        </authorList>
    </citation>
    <scope>STRUCTURE BY ELECTRON MICROSCOPY (3.45 ANGSTROMS) OF 1-190 OF RIBOSOME</scope>
    <scope>FUNCTION</scope>
    <scope>SUBCELLULAR LOCATION</scope>
    <scope>SUBUNIT</scope>
</reference>
<reference evidence="17 18" key="3">
    <citation type="journal article" date="2016" name="Cell">
        <title>Decoding mammalian ribosome-mRNA states by translational GTPase complexes.</title>
        <authorList>
            <person name="Shao S."/>
            <person name="Murray J."/>
            <person name="Brown A."/>
            <person name="Taunton J."/>
            <person name="Ramakrishnan V."/>
            <person name="Hegde R.S."/>
        </authorList>
    </citation>
    <scope>STRUCTURE BY ELECTRON MICROSCOPY (3.31 ANGSTROMS) OF RIBOSOME</scope>
    <scope>FUNCTION</scope>
    <scope>SUBCELLULAR LOCATION</scope>
    <scope>SUBUNIT</scope>
</reference>
<reference evidence="19 20" key="4">
    <citation type="journal article" date="2018" name="Elife">
        <title>Dual tRNA mimicry in the Cricket paralysis virus IRES uncovers an unexpected similarity with the Hepatitis C Virus IRES.</title>
        <authorList>
            <person name="Pisareva V.P."/>
            <person name="Pisarev A.V."/>
            <person name="Fernandez I.S."/>
        </authorList>
    </citation>
    <scope>STRUCTURE BY ELECTRON MICROSCOPY (3.20 ANGSTROMS) OF RIBOSOME</scope>
    <scope>SUBCELLULAR LOCATION</scope>
    <scope>SUBUNIT</scope>
</reference>
<reference evidence="23 24" key="5">
    <citation type="journal article" date="2018" name="Elife">
        <title>Structures of translationally inactive mammalian ribosomes.</title>
        <authorList>
            <person name="Brown A."/>
            <person name="Baird M.R."/>
            <person name="Yip M.C."/>
            <person name="Murray J."/>
            <person name="Shao S."/>
        </authorList>
    </citation>
    <scope>STRUCTURE BY ELECTRON MICROSCOPY (3.30 ANGSTROMS) OF RIBOSOME</scope>
    <scope>SUBCELLULAR LOCATION</scope>
    <scope>SUBUNIT</scope>
</reference>
<reference evidence="21 22" key="6">
    <citation type="journal article" date="2018" name="Mol. Cell">
        <title>ZNF598 is a quality control sensor of collided ribosomes.</title>
        <authorList>
            <person name="Juszkiewicz S."/>
            <person name="Chandrasekaran V."/>
            <person name="Lin Z."/>
            <person name="Kraatz S."/>
            <person name="Ramakrishnan V."/>
            <person name="Hegde R.S."/>
        </authorList>
    </citation>
    <scope>STRUCTURE BY ELECTRON MICROSCOPY (3.80 ANGSTROMS) OF RIBOSOME</scope>
    <scope>SUBCELLULAR LOCATION</scope>
    <scope>SUBUNIT</scope>
</reference>
<reference evidence="27 28" key="7">
    <citation type="journal article" date="2019" name="Elife">
        <title>Structural and mutational analysis of the ribosome-arresting human XBP1u.</title>
        <authorList>
            <person name="Shanmuganathan V."/>
            <person name="Schiller N."/>
            <person name="Magoulopoulou A."/>
            <person name="Cheng J."/>
            <person name="Braunger K."/>
            <person name="Cymer F."/>
            <person name="Berninghausen O."/>
            <person name="Beatrix B."/>
            <person name="Kohno K."/>
            <person name="von Heijne G."/>
            <person name="Beckmann R."/>
        </authorList>
    </citation>
    <scope>STRUCTURE BY ELECTRON MICROSCOPY (3.00 ANGSTROMS) OF RIBOSOME</scope>
    <scope>SUBCELLULAR LOCATION</scope>
    <scope>SUBUNIT</scope>
</reference>
<reference evidence="25 26" key="8">
    <citation type="journal article" date="2019" name="EMBO J.">
        <title>The Israeli acute paralysis virus IRES captures host ribosomes by mimicking a ribosomal state with hybrid tRNAs.</title>
        <authorList>
            <person name="Acosta-Reyes F."/>
            <person name="Neupane R."/>
            <person name="Frank J."/>
            <person name="Fernandez I.S."/>
        </authorList>
    </citation>
    <scope>STRUCTURE BY ELECTRON MICROSCOPY (3.10 ANGSTROMS) OF RIBOSOME</scope>
    <scope>SUBCELLULAR LOCATION</scope>
    <scope>SUBUNIT</scope>
</reference>
<reference evidence="29" key="9">
    <citation type="journal article" date="2019" name="Nat. Struct. Mol. Biol.">
        <title>Mechanism of ribosome stalling during translation of a poly(A) tail.</title>
        <authorList>
            <person name="Chandrasekaran V."/>
            <person name="Juszkiewicz S."/>
            <person name="Choi J."/>
            <person name="Puglisi J.D."/>
            <person name="Brown A."/>
            <person name="Shao S."/>
            <person name="Ramakrishnan V."/>
            <person name="Hegde R.S."/>
        </authorList>
    </citation>
    <scope>STRUCTURE BY ELECTRON MICROSCOPY (2.80 ANGSTROMS) OF RIBOSOME</scope>
    <scope>SUBCELLULAR LOCATION</scope>
    <scope>SUBUNIT</scope>
</reference>
<reference evidence="30 31" key="10">
    <citation type="journal article" date="2020" name="Cell Rep.">
        <title>The Halastavi arva virus intergenic region IRES promotes translation by the simplest possible initiation mechanism.</title>
        <authorList>
            <person name="Abaeva I.S."/>
            <person name="Vicens Q."/>
            <person name="Bochler A."/>
            <person name="Soufari H."/>
            <person name="Simonetti A."/>
            <person name="Pestova T.V."/>
            <person name="Hashem Y."/>
            <person name="Hellen C.U.T."/>
        </authorList>
    </citation>
    <scope>STRUCTURE BY ELECTRON MICROSCOPY (3.49 ANGSTROMS) OF 1-190 OF RIBOSOME</scope>
    <scope>SUBCELLULAR LOCATION</scope>
    <scope>SUBUNIT</scope>
</reference>
<reference evidence="33 34" key="11">
    <citation type="journal article" date="2022" name="Mol. Cell">
        <title>Direct epitranscriptomic regulation of mammalian translation initiation through N4-acetylcytidine.</title>
        <authorList>
            <person name="Arango D."/>
            <person name="Sturgill D."/>
            <person name="Yang R."/>
            <person name="Kanai T."/>
            <person name="Bauer P."/>
            <person name="Roy J."/>
            <person name="Wang Z."/>
            <person name="Hosogane M."/>
            <person name="Schiffers S."/>
            <person name="Oberdoerffer S."/>
        </authorList>
    </citation>
    <scope>STRUCTURE BY ELECTRON MICROSCOPY (2.80 ANGSTROMS) OF 1-190 OF RIBOSOME</scope>
    <scope>SUBCELLULAR LOCATION</scope>
    <scope>SUBUNIT</scope>
</reference>
<reference evidence="35 36" key="12">
    <citation type="journal article" date="2022" name="Science">
        <title>Structure of the mammalian ribosome as it decodes the selenocysteine UGA codon.</title>
        <authorList>
            <person name="Hilal T."/>
            <person name="Killam B.Y."/>
            <person name="Grozdanovic M."/>
            <person name="Dobosz-Bartoszek M."/>
            <person name="Loerke J."/>
            <person name="Buerger J."/>
            <person name="Mielke T."/>
            <person name="Copeland P.R."/>
            <person name="Simonovic M."/>
            <person name="Spahn C.M.T."/>
        </authorList>
    </citation>
    <scope>STRUCTURE BY ELECTRON MICROSCOPY (2.80 ANGSTROMS) OF RIBOSOME</scope>
    <scope>SUBCELLULAR LOCATION</scope>
    <scope>SUBUNIT</scope>
</reference>
<reference evidence="32" key="13">
    <citation type="journal article" date="2023" name="Nature">
        <title>A molecular network of conserved factors keeps ribosomes dormant in the egg.</title>
        <authorList>
            <person name="Leesch F."/>
            <person name="Lorenzo-Orts L."/>
            <person name="Pribitzer C."/>
            <person name="Grishkovskaya I."/>
            <person name="Roehsner J."/>
            <person name="Chugunova A."/>
            <person name="Matzinger M."/>
            <person name="Roitinger E."/>
            <person name="Belacic K."/>
            <person name="Kandolf S."/>
            <person name="Lin T.Y."/>
            <person name="Mechtler K."/>
            <person name="Meinhart A."/>
            <person name="Haselbach D."/>
            <person name="Pauli A."/>
        </authorList>
    </citation>
    <scope>STRUCTURE BY ELECTRON MICROSCOPY (2.30 ANGSTROMS) OF RIBOSOME</scope>
    <scope>SUBCELLULAR LOCATION</scope>
    <scope>SUBUNIT</scope>
</reference>
<feature type="chain" id="PRO_0000460094" description="Large ribosomal subunit protein uL6">
    <location>
        <begin position="1"/>
        <end position="192"/>
    </location>
</feature>
<feature type="modified residue" description="N6-acetyllysine" evidence="1">
    <location>
        <position position="121"/>
    </location>
</feature>